<feature type="chain" id="PRO_0000319652" description="Phosphoribosyl-ATP pyrophosphatase">
    <location>
        <begin position="1"/>
        <end position="109"/>
    </location>
</feature>
<protein>
    <recommendedName>
        <fullName evidence="1">Phosphoribosyl-ATP pyrophosphatase</fullName>
        <shortName evidence="1">PRA-PH</shortName>
        <ecNumber evidence="1">3.6.1.31</ecNumber>
    </recommendedName>
</protein>
<organism>
    <name type="scientific">Paramagnetospirillum magneticum (strain ATCC 700264 / AMB-1)</name>
    <name type="common">Magnetospirillum magneticum</name>
    <dbReference type="NCBI Taxonomy" id="342108"/>
    <lineage>
        <taxon>Bacteria</taxon>
        <taxon>Pseudomonadati</taxon>
        <taxon>Pseudomonadota</taxon>
        <taxon>Alphaproteobacteria</taxon>
        <taxon>Rhodospirillales</taxon>
        <taxon>Magnetospirillaceae</taxon>
        <taxon>Paramagnetospirillum</taxon>
    </lineage>
</organism>
<comment type="catalytic activity">
    <reaction evidence="1">
        <text>1-(5-phospho-beta-D-ribosyl)-ATP + H2O = 1-(5-phospho-beta-D-ribosyl)-5'-AMP + diphosphate + H(+)</text>
        <dbReference type="Rhea" id="RHEA:22828"/>
        <dbReference type="ChEBI" id="CHEBI:15377"/>
        <dbReference type="ChEBI" id="CHEBI:15378"/>
        <dbReference type="ChEBI" id="CHEBI:33019"/>
        <dbReference type="ChEBI" id="CHEBI:59457"/>
        <dbReference type="ChEBI" id="CHEBI:73183"/>
        <dbReference type="EC" id="3.6.1.31"/>
    </reaction>
</comment>
<comment type="pathway">
    <text evidence="1">Amino-acid biosynthesis; L-histidine biosynthesis; L-histidine from 5-phospho-alpha-D-ribose 1-diphosphate: step 2/9.</text>
</comment>
<comment type="subcellular location">
    <subcellularLocation>
        <location evidence="1">Cytoplasm</location>
    </subcellularLocation>
</comment>
<comment type="similarity">
    <text evidence="1">Belongs to the PRA-PH family.</text>
</comment>
<dbReference type="EC" id="3.6.1.31" evidence="1"/>
<dbReference type="EMBL" id="AP007255">
    <property type="protein sequence ID" value="BAE53334.1"/>
    <property type="molecule type" value="Genomic_DNA"/>
</dbReference>
<dbReference type="RefSeq" id="WP_011386874.1">
    <property type="nucleotide sequence ID" value="NC_007626.1"/>
</dbReference>
<dbReference type="SMR" id="Q2VYJ1"/>
<dbReference type="STRING" id="342108.amb4530"/>
<dbReference type="KEGG" id="mag:amb4530"/>
<dbReference type="HOGENOM" id="CLU_123337_1_1_5"/>
<dbReference type="OrthoDB" id="9814738at2"/>
<dbReference type="UniPathway" id="UPA00031">
    <property type="reaction ID" value="UER00007"/>
</dbReference>
<dbReference type="Proteomes" id="UP000007058">
    <property type="component" value="Chromosome"/>
</dbReference>
<dbReference type="GO" id="GO:0005737">
    <property type="term" value="C:cytoplasm"/>
    <property type="evidence" value="ECO:0007669"/>
    <property type="project" value="UniProtKB-SubCell"/>
</dbReference>
<dbReference type="GO" id="GO:0005524">
    <property type="term" value="F:ATP binding"/>
    <property type="evidence" value="ECO:0007669"/>
    <property type="project" value="UniProtKB-KW"/>
</dbReference>
<dbReference type="GO" id="GO:0004636">
    <property type="term" value="F:phosphoribosyl-ATP diphosphatase activity"/>
    <property type="evidence" value="ECO:0007669"/>
    <property type="project" value="UniProtKB-UniRule"/>
</dbReference>
<dbReference type="GO" id="GO:0000105">
    <property type="term" value="P:L-histidine biosynthetic process"/>
    <property type="evidence" value="ECO:0007669"/>
    <property type="project" value="UniProtKB-UniRule"/>
</dbReference>
<dbReference type="CDD" id="cd11534">
    <property type="entry name" value="NTP-PPase_HisIE_like"/>
    <property type="match status" value="1"/>
</dbReference>
<dbReference type="Gene3D" id="1.10.287.1080">
    <property type="entry name" value="MazG-like"/>
    <property type="match status" value="1"/>
</dbReference>
<dbReference type="HAMAP" id="MF_01020">
    <property type="entry name" value="HisE"/>
    <property type="match status" value="1"/>
</dbReference>
<dbReference type="InterPro" id="IPR008179">
    <property type="entry name" value="HisE"/>
</dbReference>
<dbReference type="InterPro" id="IPR021130">
    <property type="entry name" value="PRib-ATP_PPHydrolase-like"/>
</dbReference>
<dbReference type="NCBIfam" id="TIGR03188">
    <property type="entry name" value="histidine_hisI"/>
    <property type="match status" value="1"/>
</dbReference>
<dbReference type="NCBIfam" id="NF001611">
    <property type="entry name" value="PRK00400.1-3"/>
    <property type="match status" value="1"/>
</dbReference>
<dbReference type="NCBIfam" id="NF001613">
    <property type="entry name" value="PRK00400.1-5"/>
    <property type="match status" value="1"/>
</dbReference>
<dbReference type="PANTHER" id="PTHR42945">
    <property type="entry name" value="HISTIDINE BIOSYNTHESIS BIFUNCTIONAL PROTEIN"/>
    <property type="match status" value="1"/>
</dbReference>
<dbReference type="PANTHER" id="PTHR42945:SF1">
    <property type="entry name" value="HISTIDINE BIOSYNTHESIS BIFUNCTIONAL PROTEIN HIS7"/>
    <property type="match status" value="1"/>
</dbReference>
<dbReference type="Pfam" id="PF01503">
    <property type="entry name" value="PRA-PH"/>
    <property type="match status" value="1"/>
</dbReference>
<dbReference type="SUPFAM" id="SSF101386">
    <property type="entry name" value="all-alpha NTP pyrophosphatases"/>
    <property type="match status" value="1"/>
</dbReference>
<gene>
    <name evidence="1" type="primary">hisE</name>
    <name type="ordered locus">amb4530</name>
</gene>
<reference key="1">
    <citation type="journal article" date="2005" name="DNA Res.">
        <title>Complete genome sequence of the facultative anaerobic magnetotactic bacterium Magnetospirillum sp. strain AMB-1.</title>
        <authorList>
            <person name="Matsunaga T."/>
            <person name="Okamura Y."/>
            <person name="Fukuda Y."/>
            <person name="Wahyudi A.T."/>
            <person name="Murase Y."/>
            <person name="Takeyama H."/>
        </authorList>
    </citation>
    <scope>NUCLEOTIDE SEQUENCE [LARGE SCALE GENOMIC DNA]</scope>
    <source>
        <strain>ATCC 700264 / AMB-1</strain>
    </source>
</reference>
<name>HIS2_PARM1</name>
<accession>Q2VYJ1</accession>
<proteinExistence type="inferred from homology"/>
<sequence>MAQDSKILEELYTVIASRKGTDPDKSYTAKLFARGRGKIAQKFGEEAVETVVAALSEGKDELVGESADTLYHLLVLWADCGVEPAKVWAELARRTGTSGIDEKKSRAKK</sequence>
<keyword id="KW-0028">Amino-acid biosynthesis</keyword>
<keyword id="KW-0067">ATP-binding</keyword>
<keyword id="KW-0963">Cytoplasm</keyword>
<keyword id="KW-0368">Histidine biosynthesis</keyword>
<keyword id="KW-0378">Hydrolase</keyword>
<keyword id="KW-0547">Nucleotide-binding</keyword>
<evidence type="ECO:0000255" key="1">
    <source>
        <dbReference type="HAMAP-Rule" id="MF_01020"/>
    </source>
</evidence>